<gene>
    <name type="primary">OPG075</name>
    <name type="ORF">R2L</name>
</gene>
<sequence>MAEEFVQQRLANNKVTIFVKFTCPFCRNALDILNKFSFKRGAYEIVDIKEFKPENELRDYFEQITGGRTVPRIFFGKTSIGGYSDLLEIDNMDALGDILSSIGVLRTC</sequence>
<reference key="1">
    <citation type="submission" date="2003-03" db="EMBL/GenBank/DDBJ databases">
        <title>Structure-function and organization of cowpox virus strain GRI-90 complete genome.</title>
        <authorList>
            <person name="Shchelkunov S.N."/>
            <person name="Safronov P.F."/>
            <person name="Totmenin A.V."/>
            <person name="Miheev M.V."/>
            <person name="Ryazankina O.I."/>
            <person name="Petrov N.A."/>
            <person name="Gutorov V.V."/>
            <person name="Kotwal G.J."/>
            <person name="Sandakhchiev L.S."/>
        </authorList>
    </citation>
    <scope>NUCLEOTIDE SEQUENCE [LARGE SCALE GENOMIC DNA]</scope>
</reference>
<keyword id="KW-1015">Disulfide bond</keyword>
<keyword id="KW-0249">Electron transport</keyword>
<keyword id="KW-0676">Redox-active center</keyword>
<keyword id="KW-0813">Transport</keyword>
<keyword id="KW-0946">Virion</keyword>
<organism>
    <name type="scientific">Cowpox virus (strain GRI-90 / Grishak)</name>
    <name type="common">CPV</name>
    <dbReference type="NCBI Taxonomy" id="265871"/>
    <lineage>
        <taxon>Viruses</taxon>
        <taxon>Varidnaviria</taxon>
        <taxon>Bamfordvirae</taxon>
        <taxon>Nucleocytoviricota</taxon>
        <taxon>Pokkesviricetes</taxon>
        <taxon>Chitovirales</taxon>
        <taxon>Poxviridae</taxon>
        <taxon>Chordopoxvirinae</taxon>
        <taxon>Orthopoxvirus</taxon>
        <taxon>Cowpox virus</taxon>
    </lineage>
</organism>
<name>GLRX1_CWPXG</name>
<feature type="chain" id="PRO_0000141623" description="Glutaredoxin-1">
    <location>
        <begin position="1"/>
        <end position="108"/>
    </location>
</feature>
<feature type="domain" description="Glutaredoxin" evidence="3">
    <location>
        <begin position="3"/>
        <end position="106"/>
    </location>
</feature>
<feature type="disulfide bond" description="Redox-active" evidence="2">
    <location>
        <begin position="23"/>
        <end position="26"/>
    </location>
</feature>
<evidence type="ECO:0000250" key="1"/>
<evidence type="ECO:0000250" key="2">
    <source>
        <dbReference type="UniProtKB" id="P68692"/>
    </source>
</evidence>
<evidence type="ECO:0000255" key="3">
    <source>
        <dbReference type="PROSITE-ProRule" id="PRU00686"/>
    </source>
</evidence>
<evidence type="ECO:0000305" key="4"/>
<dbReference type="EMBL" id="X94355">
    <property type="protein sequence ID" value="CAD90618.1"/>
    <property type="molecule type" value="Genomic_DNA"/>
</dbReference>
<dbReference type="SMR" id="Q80E01"/>
<dbReference type="Proteomes" id="UP000137384">
    <property type="component" value="Segment"/>
</dbReference>
<dbReference type="GO" id="GO:0044423">
    <property type="term" value="C:virion component"/>
    <property type="evidence" value="ECO:0007669"/>
    <property type="project" value="UniProtKB-KW"/>
</dbReference>
<dbReference type="GO" id="GO:0015038">
    <property type="term" value="F:glutathione disulfide oxidoreductase activity"/>
    <property type="evidence" value="ECO:0007669"/>
    <property type="project" value="TreeGrafter"/>
</dbReference>
<dbReference type="Gene3D" id="3.40.30.10">
    <property type="entry name" value="Glutaredoxin"/>
    <property type="match status" value="1"/>
</dbReference>
<dbReference type="InterPro" id="IPR011767">
    <property type="entry name" value="GLR_AS"/>
</dbReference>
<dbReference type="InterPro" id="IPR047185">
    <property type="entry name" value="GLRX1"/>
</dbReference>
<dbReference type="InterPro" id="IPR002109">
    <property type="entry name" value="Glutaredoxin"/>
</dbReference>
<dbReference type="InterPro" id="IPR011899">
    <property type="entry name" value="Glutaredoxin_euk/vir"/>
</dbReference>
<dbReference type="InterPro" id="IPR014025">
    <property type="entry name" value="Glutaredoxin_subgr"/>
</dbReference>
<dbReference type="InterPro" id="IPR036249">
    <property type="entry name" value="Thioredoxin-like_sf"/>
</dbReference>
<dbReference type="NCBIfam" id="TIGR02180">
    <property type="entry name" value="GRX_euk"/>
    <property type="match status" value="1"/>
</dbReference>
<dbReference type="PANTHER" id="PTHR46185">
    <property type="entry name" value="GLUTAREDOXIN-1"/>
    <property type="match status" value="1"/>
</dbReference>
<dbReference type="PANTHER" id="PTHR46185:SF1">
    <property type="entry name" value="GLUTAREDOXIN-1"/>
    <property type="match status" value="1"/>
</dbReference>
<dbReference type="Pfam" id="PF00462">
    <property type="entry name" value="Glutaredoxin"/>
    <property type="match status" value="1"/>
</dbReference>
<dbReference type="PRINTS" id="PR00160">
    <property type="entry name" value="GLUTAREDOXIN"/>
</dbReference>
<dbReference type="SUPFAM" id="SSF52833">
    <property type="entry name" value="Thioredoxin-like"/>
    <property type="match status" value="1"/>
</dbReference>
<dbReference type="PROSITE" id="PS00195">
    <property type="entry name" value="GLUTAREDOXIN_1"/>
    <property type="match status" value="1"/>
</dbReference>
<dbReference type="PROSITE" id="PS51354">
    <property type="entry name" value="GLUTAREDOXIN_2"/>
    <property type="match status" value="1"/>
</dbReference>
<protein>
    <recommendedName>
        <fullName>Glutaredoxin-1</fullName>
    </recommendedName>
</protein>
<proteinExistence type="inferred from homology"/>
<accession>Q80E01</accession>
<comment type="function">
    <text evidence="1">Has thioltransferase and dehydroascorbate reductase activities.</text>
</comment>
<comment type="subcellular location">
    <subcellularLocation>
        <location>Virion</location>
    </subcellularLocation>
    <text evidence="1">Localizes to the virion core.</text>
</comment>
<comment type="induction">
    <text evidence="2">Expressed in the intermediate phase of the viral replicative cycle.</text>
</comment>
<comment type="similarity">
    <text evidence="4">Belongs to the glutaredoxin family.</text>
</comment>
<organismHost>
    <name type="scientific">Bos taurus</name>
    <name type="common">Bovine</name>
    <dbReference type="NCBI Taxonomy" id="9913"/>
</organismHost>
<organismHost>
    <name type="scientific">Felis catus</name>
    <name type="common">Cat</name>
    <name type="synonym">Felis silvestris catus</name>
    <dbReference type="NCBI Taxonomy" id="9685"/>
</organismHost>
<organismHost>
    <name type="scientific">Homo sapiens</name>
    <name type="common">Human</name>
    <dbReference type="NCBI Taxonomy" id="9606"/>
</organismHost>
<organismHost>
    <name type="scientific">Loxodonta africana</name>
    <name type="common">African elephant</name>
    <dbReference type="NCBI Taxonomy" id="9785"/>
</organismHost>
<organismHost>
    <name type="scientific">Microtus agrestis</name>
    <name type="common">Short-tailed field vole</name>
    <dbReference type="NCBI Taxonomy" id="29092"/>
</organismHost>
<organismHost>
    <name type="scientific">Mus musculus</name>
    <name type="common">Mouse</name>
    <dbReference type="NCBI Taxonomy" id="10090"/>
</organismHost>
<organismHost>
    <name type="scientific">Myodes glareolus</name>
    <name type="common">Bank vole</name>
    <name type="synonym">Clethrionomys glareolus</name>
    <dbReference type="NCBI Taxonomy" id="447135"/>
</organismHost>